<evidence type="ECO:0000250" key="1"/>
<evidence type="ECO:0000255" key="2"/>
<evidence type="ECO:0000305" key="3"/>
<reference key="1">
    <citation type="journal article" date="2005" name="Science">
        <title>The transcriptional landscape of the mammalian genome.</title>
        <authorList>
            <person name="Carninci P."/>
            <person name="Kasukawa T."/>
            <person name="Katayama S."/>
            <person name="Gough J."/>
            <person name="Frith M.C."/>
            <person name="Maeda N."/>
            <person name="Oyama R."/>
            <person name="Ravasi T."/>
            <person name="Lenhard B."/>
            <person name="Wells C."/>
            <person name="Kodzius R."/>
            <person name="Shimokawa K."/>
            <person name="Bajic V.B."/>
            <person name="Brenner S.E."/>
            <person name="Batalov S."/>
            <person name="Forrest A.R."/>
            <person name="Zavolan M."/>
            <person name="Davis M.J."/>
            <person name="Wilming L.G."/>
            <person name="Aidinis V."/>
            <person name="Allen J.E."/>
            <person name="Ambesi-Impiombato A."/>
            <person name="Apweiler R."/>
            <person name="Aturaliya R.N."/>
            <person name="Bailey T.L."/>
            <person name="Bansal M."/>
            <person name="Baxter L."/>
            <person name="Beisel K.W."/>
            <person name="Bersano T."/>
            <person name="Bono H."/>
            <person name="Chalk A.M."/>
            <person name="Chiu K.P."/>
            <person name="Choudhary V."/>
            <person name="Christoffels A."/>
            <person name="Clutterbuck D.R."/>
            <person name="Crowe M.L."/>
            <person name="Dalla E."/>
            <person name="Dalrymple B.P."/>
            <person name="de Bono B."/>
            <person name="Della Gatta G."/>
            <person name="di Bernardo D."/>
            <person name="Down T."/>
            <person name="Engstrom P."/>
            <person name="Fagiolini M."/>
            <person name="Faulkner G."/>
            <person name="Fletcher C.F."/>
            <person name="Fukushima T."/>
            <person name="Furuno M."/>
            <person name="Futaki S."/>
            <person name="Gariboldi M."/>
            <person name="Georgii-Hemming P."/>
            <person name="Gingeras T.R."/>
            <person name="Gojobori T."/>
            <person name="Green R.E."/>
            <person name="Gustincich S."/>
            <person name="Harbers M."/>
            <person name="Hayashi Y."/>
            <person name="Hensch T.K."/>
            <person name="Hirokawa N."/>
            <person name="Hill D."/>
            <person name="Huminiecki L."/>
            <person name="Iacono M."/>
            <person name="Ikeo K."/>
            <person name="Iwama A."/>
            <person name="Ishikawa T."/>
            <person name="Jakt M."/>
            <person name="Kanapin A."/>
            <person name="Katoh M."/>
            <person name="Kawasawa Y."/>
            <person name="Kelso J."/>
            <person name="Kitamura H."/>
            <person name="Kitano H."/>
            <person name="Kollias G."/>
            <person name="Krishnan S.P."/>
            <person name="Kruger A."/>
            <person name="Kummerfeld S.K."/>
            <person name="Kurochkin I.V."/>
            <person name="Lareau L.F."/>
            <person name="Lazarevic D."/>
            <person name="Lipovich L."/>
            <person name="Liu J."/>
            <person name="Liuni S."/>
            <person name="McWilliam S."/>
            <person name="Madan Babu M."/>
            <person name="Madera M."/>
            <person name="Marchionni L."/>
            <person name="Matsuda H."/>
            <person name="Matsuzawa S."/>
            <person name="Miki H."/>
            <person name="Mignone F."/>
            <person name="Miyake S."/>
            <person name="Morris K."/>
            <person name="Mottagui-Tabar S."/>
            <person name="Mulder N."/>
            <person name="Nakano N."/>
            <person name="Nakauchi H."/>
            <person name="Ng P."/>
            <person name="Nilsson R."/>
            <person name="Nishiguchi S."/>
            <person name="Nishikawa S."/>
            <person name="Nori F."/>
            <person name="Ohara O."/>
            <person name="Okazaki Y."/>
            <person name="Orlando V."/>
            <person name="Pang K.C."/>
            <person name="Pavan W.J."/>
            <person name="Pavesi G."/>
            <person name="Pesole G."/>
            <person name="Petrovsky N."/>
            <person name="Piazza S."/>
            <person name="Reed J."/>
            <person name="Reid J.F."/>
            <person name="Ring B.Z."/>
            <person name="Ringwald M."/>
            <person name="Rost B."/>
            <person name="Ruan Y."/>
            <person name="Salzberg S.L."/>
            <person name="Sandelin A."/>
            <person name="Schneider C."/>
            <person name="Schoenbach C."/>
            <person name="Sekiguchi K."/>
            <person name="Semple C.A."/>
            <person name="Seno S."/>
            <person name="Sessa L."/>
            <person name="Sheng Y."/>
            <person name="Shibata Y."/>
            <person name="Shimada H."/>
            <person name="Shimada K."/>
            <person name="Silva D."/>
            <person name="Sinclair B."/>
            <person name="Sperling S."/>
            <person name="Stupka E."/>
            <person name="Sugiura K."/>
            <person name="Sultana R."/>
            <person name="Takenaka Y."/>
            <person name="Taki K."/>
            <person name="Tammoja K."/>
            <person name="Tan S.L."/>
            <person name="Tang S."/>
            <person name="Taylor M.S."/>
            <person name="Tegner J."/>
            <person name="Teichmann S.A."/>
            <person name="Ueda H.R."/>
            <person name="van Nimwegen E."/>
            <person name="Verardo R."/>
            <person name="Wei C.L."/>
            <person name="Yagi K."/>
            <person name="Yamanishi H."/>
            <person name="Zabarovsky E."/>
            <person name="Zhu S."/>
            <person name="Zimmer A."/>
            <person name="Hide W."/>
            <person name="Bult C."/>
            <person name="Grimmond S.M."/>
            <person name="Teasdale R.D."/>
            <person name="Liu E.T."/>
            <person name="Brusic V."/>
            <person name="Quackenbush J."/>
            <person name="Wahlestedt C."/>
            <person name="Mattick J.S."/>
            <person name="Hume D.A."/>
            <person name="Kai C."/>
            <person name="Sasaki D."/>
            <person name="Tomaru Y."/>
            <person name="Fukuda S."/>
            <person name="Kanamori-Katayama M."/>
            <person name="Suzuki M."/>
            <person name="Aoki J."/>
            <person name="Arakawa T."/>
            <person name="Iida J."/>
            <person name="Imamura K."/>
            <person name="Itoh M."/>
            <person name="Kato T."/>
            <person name="Kawaji H."/>
            <person name="Kawagashira N."/>
            <person name="Kawashima T."/>
            <person name="Kojima M."/>
            <person name="Kondo S."/>
            <person name="Konno H."/>
            <person name="Nakano K."/>
            <person name="Ninomiya N."/>
            <person name="Nishio T."/>
            <person name="Okada M."/>
            <person name="Plessy C."/>
            <person name="Shibata K."/>
            <person name="Shiraki T."/>
            <person name="Suzuki S."/>
            <person name="Tagami M."/>
            <person name="Waki K."/>
            <person name="Watahiki A."/>
            <person name="Okamura-Oho Y."/>
            <person name="Suzuki H."/>
            <person name="Kawai J."/>
            <person name="Hayashizaki Y."/>
        </authorList>
    </citation>
    <scope>NUCLEOTIDE SEQUENCE [LARGE SCALE MRNA]</scope>
    <source>
        <strain>C57BL/6J</strain>
        <tissue>Spinal ganglion</tissue>
        <tissue>Testis</tissue>
        <tissue>Thymus</tissue>
    </source>
</reference>
<accession>Q9D4P0</accession>
<accession>Q8BFU5</accession>
<feature type="initiator methionine" description="Removed" evidence="2">
    <location>
        <position position="1"/>
    </location>
</feature>
<feature type="chain" id="PRO_0000207471" description="ADP-ribosylation factor-like protein 5B">
    <location>
        <begin position="2"/>
        <end position="179"/>
    </location>
</feature>
<feature type="binding site" evidence="1">
    <location>
        <begin position="23"/>
        <end position="30"/>
    </location>
    <ligand>
        <name>GTP</name>
        <dbReference type="ChEBI" id="CHEBI:37565"/>
    </ligand>
</feature>
<feature type="binding site" evidence="1">
    <location>
        <begin position="66"/>
        <end position="70"/>
    </location>
    <ligand>
        <name>GTP</name>
        <dbReference type="ChEBI" id="CHEBI:37565"/>
    </ligand>
</feature>
<feature type="binding site" evidence="1">
    <location>
        <begin position="125"/>
        <end position="128"/>
    </location>
    <ligand>
        <name>GTP</name>
        <dbReference type="ChEBI" id="CHEBI:37565"/>
    </ligand>
</feature>
<feature type="binding site" evidence="1">
    <location>
        <position position="159"/>
    </location>
    <ligand>
        <name>GTP</name>
        <dbReference type="ChEBI" id="CHEBI:37565"/>
    </ligand>
</feature>
<feature type="lipid moiety-binding region" description="N-myristoyl glycine" evidence="2">
    <location>
        <position position="2"/>
    </location>
</feature>
<name>ARL5B_MOUSE</name>
<organism>
    <name type="scientific">Mus musculus</name>
    <name type="common">Mouse</name>
    <dbReference type="NCBI Taxonomy" id="10090"/>
    <lineage>
        <taxon>Eukaryota</taxon>
        <taxon>Metazoa</taxon>
        <taxon>Chordata</taxon>
        <taxon>Craniata</taxon>
        <taxon>Vertebrata</taxon>
        <taxon>Euteleostomi</taxon>
        <taxon>Mammalia</taxon>
        <taxon>Eutheria</taxon>
        <taxon>Euarchontoglires</taxon>
        <taxon>Glires</taxon>
        <taxon>Rodentia</taxon>
        <taxon>Myomorpha</taxon>
        <taxon>Muroidea</taxon>
        <taxon>Muridae</taxon>
        <taxon>Murinae</taxon>
        <taxon>Mus</taxon>
        <taxon>Mus</taxon>
    </lineage>
</organism>
<keyword id="KW-0342">GTP-binding</keyword>
<keyword id="KW-0449">Lipoprotein</keyword>
<keyword id="KW-0519">Myristate</keyword>
<keyword id="KW-0547">Nucleotide-binding</keyword>
<keyword id="KW-1185">Reference proteome</keyword>
<comment type="function">
    <text evidence="1">Binds and exchanges GTP and GDP.</text>
</comment>
<comment type="similarity">
    <text evidence="3">Belongs to the small GTPase superfamily. Arf family.</text>
</comment>
<comment type="sequence caution" evidence="3">
    <conflict type="erroneous initiation">
        <sequence resource="EMBL-CDS" id="BAB30204"/>
    </conflict>
</comment>
<comment type="sequence caution" evidence="3">
    <conflict type="erroneous initiation">
        <sequence resource="EMBL-CDS" id="BAC30872"/>
    </conflict>
</comment>
<comment type="sequence caution" evidence="3">
    <conflict type="erroneous initiation">
        <sequence resource="EMBL-CDS" id="BAC35496"/>
    </conflict>
</comment>
<sequence length="179" mass="20375">MGLIFAKLWSLFCNQEHKVIIVGLDNAGKTTILYQFLMNEVVHTSPTIGSNVEEIVVKNTHFLMWDIGGQESLRSSWNTYYSNTEFIILVVDSIDRERLAITKEELYRMLAHEDLRKAAVLIFANKQDMKGCMTAAEISKYLTLSSIKDHPWHIQSCCALTGEGLCQGLEWMTSRIGVR</sequence>
<proteinExistence type="evidence at transcript level"/>
<dbReference type="EMBL" id="AK016359">
    <property type="protein sequence ID" value="BAB30204.2"/>
    <property type="status" value="ALT_INIT"/>
    <property type="molecule type" value="mRNA"/>
</dbReference>
<dbReference type="EMBL" id="AK040422">
    <property type="protein sequence ID" value="BAC30591.1"/>
    <property type="molecule type" value="mRNA"/>
</dbReference>
<dbReference type="EMBL" id="AK041237">
    <property type="protein sequence ID" value="BAC30872.1"/>
    <property type="status" value="ALT_INIT"/>
    <property type="molecule type" value="mRNA"/>
</dbReference>
<dbReference type="EMBL" id="AK042200">
    <property type="protein sequence ID" value="BAC31195.1"/>
    <property type="molecule type" value="mRNA"/>
</dbReference>
<dbReference type="EMBL" id="AK053731">
    <property type="protein sequence ID" value="BAC35496.1"/>
    <property type="status" value="ALT_INIT"/>
    <property type="molecule type" value="mRNA"/>
</dbReference>
<dbReference type="EMBL" id="AK164341">
    <property type="protein sequence ID" value="BAE37748.1"/>
    <property type="molecule type" value="mRNA"/>
</dbReference>
<dbReference type="CCDS" id="CCDS15704.2"/>
<dbReference type="RefSeq" id="NP_083742.2">
    <property type="nucleotide sequence ID" value="NM_029466.4"/>
</dbReference>
<dbReference type="SMR" id="Q9D4P0"/>
<dbReference type="BioGRID" id="217808">
    <property type="interactions" value="4"/>
</dbReference>
<dbReference type="FunCoup" id="Q9D4P0">
    <property type="interactions" value="2151"/>
</dbReference>
<dbReference type="IntAct" id="Q9D4P0">
    <property type="interactions" value="1"/>
</dbReference>
<dbReference type="STRING" id="10090.ENSMUSP00000158934"/>
<dbReference type="PhosphoSitePlus" id="Q9D4P0"/>
<dbReference type="SwissPalm" id="Q9D4P0"/>
<dbReference type="PaxDb" id="10090-ENSMUSP00000069725"/>
<dbReference type="ProteomicsDB" id="283224"/>
<dbReference type="Pumba" id="Q9D4P0"/>
<dbReference type="Antibodypedia" id="25424">
    <property type="antibodies" value="107 antibodies from 21 providers"/>
</dbReference>
<dbReference type="DNASU" id="75869"/>
<dbReference type="Ensembl" id="ENSMUST00000069870.11">
    <property type="protein sequence ID" value="ENSMUSP00000069725.5"/>
    <property type="gene ID" value="ENSMUSG00000017418.15"/>
</dbReference>
<dbReference type="GeneID" id="75869"/>
<dbReference type="KEGG" id="mmu:75869"/>
<dbReference type="AGR" id="MGI:1923119"/>
<dbReference type="CTD" id="221079"/>
<dbReference type="MGI" id="MGI:1923119">
    <property type="gene designation" value="Arl5b"/>
</dbReference>
<dbReference type="VEuPathDB" id="HostDB:ENSMUSG00000017418"/>
<dbReference type="eggNOG" id="KOG0070">
    <property type="taxonomic scope" value="Eukaryota"/>
</dbReference>
<dbReference type="GeneTree" id="ENSGT00940000157567"/>
<dbReference type="InParanoid" id="Q9D4P0"/>
<dbReference type="OMA" id="FTCWDLG"/>
<dbReference type="OrthoDB" id="2011769at2759"/>
<dbReference type="BioGRID-ORCS" id="75869">
    <property type="hits" value="0 hits in 78 CRISPR screens"/>
</dbReference>
<dbReference type="ChiTaRS" id="Arl5b">
    <property type="organism name" value="mouse"/>
</dbReference>
<dbReference type="PRO" id="PR:Q9D4P0"/>
<dbReference type="Proteomes" id="UP000000589">
    <property type="component" value="Chromosome 2"/>
</dbReference>
<dbReference type="RNAct" id="Q9D4P0">
    <property type="molecule type" value="protein"/>
</dbReference>
<dbReference type="Bgee" id="ENSMUSG00000017418">
    <property type="expression patterns" value="Expressed in manus and 223 other cell types or tissues"/>
</dbReference>
<dbReference type="ExpressionAtlas" id="Q9D4P0">
    <property type="expression patterns" value="baseline and differential"/>
</dbReference>
<dbReference type="GO" id="GO:0005525">
    <property type="term" value="F:GTP binding"/>
    <property type="evidence" value="ECO:0007669"/>
    <property type="project" value="UniProtKB-KW"/>
</dbReference>
<dbReference type="GO" id="GO:0003924">
    <property type="term" value="F:GTPase activity"/>
    <property type="evidence" value="ECO:0007669"/>
    <property type="project" value="InterPro"/>
</dbReference>
<dbReference type="CDD" id="cd04153">
    <property type="entry name" value="Arl5_Arl8"/>
    <property type="match status" value="1"/>
</dbReference>
<dbReference type="FunFam" id="3.40.50.300:FF:000294">
    <property type="entry name" value="ADP-ribosylation factor-like protein 5A"/>
    <property type="match status" value="1"/>
</dbReference>
<dbReference type="Gene3D" id="3.40.50.300">
    <property type="entry name" value="P-loop containing nucleotide triphosphate hydrolases"/>
    <property type="match status" value="1"/>
</dbReference>
<dbReference type="InterPro" id="IPR027417">
    <property type="entry name" value="P-loop_NTPase"/>
</dbReference>
<dbReference type="InterPro" id="IPR005225">
    <property type="entry name" value="Small_GTP-bd"/>
</dbReference>
<dbReference type="InterPro" id="IPR024156">
    <property type="entry name" value="Small_GTPase_ARF"/>
</dbReference>
<dbReference type="InterPro" id="IPR006689">
    <property type="entry name" value="Small_GTPase_ARF/SAR"/>
</dbReference>
<dbReference type="NCBIfam" id="TIGR00231">
    <property type="entry name" value="small_GTP"/>
    <property type="match status" value="1"/>
</dbReference>
<dbReference type="PANTHER" id="PTHR11711">
    <property type="entry name" value="ADP RIBOSYLATION FACTOR-RELATED"/>
    <property type="match status" value="1"/>
</dbReference>
<dbReference type="Pfam" id="PF00025">
    <property type="entry name" value="Arf"/>
    <property type="match status" value="1"/>
</dbReference>
<dbReference type="PRINTS" id="PR00328">
    <property type="entry name" value="SAR1GTPBP"/>
</dbReference>
<dbReference type="SMART" id="SM00177">
    <property type="entry name" value="ARF"/>
    <property type="match status" value="1"/>
</dbReference>
<dbReference type="SMART" id="SM00178">
    <property type="entry name" value="SAR"/>
    <property type="match status" value="1"/>
</dbReference>
<dbReference type="SUPFAM" id="SSF52540">
    <property type="entry name" value="P-loop containing nucleoside triphosphate hydrolases"/>
    <property type="match status" value="1"/>
</dbReference>
<dbReference type="PROSITE" id="PS51417">
    <property type="entry name" value="ARF"/>
    <property type="match status" value="1"/>
</dbReference>
<protein>
    <recommendedName>
        <fullName>ADP-ribosylation factor-like protein 5B</fullName>
    </recommendedName>
    <alternativeName>
        <fullName>ADP-ribosylation factor-like protein 8</fullName>
    </alternativeName>
</protein>
<gene>
    <name type="primary">Arl5b</name>
    <name type="synonym">Arl8</name>
</gene>